<gene>
    <name evidence="1" type="primary">glmU</name>
    <name type="ordered locus">SMU_1635</name>
</gene>
<name>GLMU_STRMU</name>
<accession>Q8DSX2</accession>
<sequence length="459" mass="49895">MTNYAIILAAGKGTRMKSDLPKVLHQVAGLTMLEHVKRAVDTMNPAKTVTVVGHKAELVQKVLEDQSEFVLQSEQLGTGHAVMMAESSLAELEGQTLVIAGDTPLIRGESLKNLLHYHKSHKNVATILTAEADDPFGYGRIIRNQNAEVIKIVEQKDASDYEQQVKEINTGTYVFDNKRLFEALKEINTNNAQGEYYLTDVISIFKEADEKVGAYKLADFDESLGVNDRVALAKAEKVMRRRINHAHMVNGVTLTNPASTYIDSDVIIAPDVVIEANVTLKGQTKIETGAVLTNGTYIVDSVIGENTVITHSMIEASRIEKNVTVGPYAHLRPNSVLEEAVHVGNFVEVKASTLGKETKAGHLTYIGNAEVGHDVNFGAGTITVNYDGQNKYKTIIGNHVFVGSNSTIIAPLTIGDNALTAAGSTIHKDVPVDSIAIGRGRQVNKEGYAKKKPHHPNNK</sequence>
<comment type="function">
    <text evidence="1">Catalyzes the last two sequential reactions in the de novo biosynthetic pathway for UDP-N-acetylglucosamine (UDP-GlcNAc). The C-terminal domain catalyzes the transfer of acetyl group from acetyl coenzyme A to glucosamine-1-phosphate (GlcN-1-P) to produce N-acetylglucosamine-1-phosphate (GlcNAc-1-P), which is converted into UDP-GlcNAc by the transfer of uridine 5-monophosphate (from uridine 5-triphosphate), a reaction catalyzed by the N-terminal domain.</text>
</comment>
<comment type="catalytic activity">
    <reaction evidence="1">
        <text>alpha-D-glucosamine 1-phosphate + acetyl-CoA = N-acetyl-alpha-D-glucosamine 1-phosphate + CoA + H(+)</text>
        <dbReference type="Rhea" id="RHEA:13725"/>
        <dbReference type="ChEBI" id="CHEBI:15378"/>
        <dbReference type="ChEBI" id="CHEBI:57287"/>
        <dbReference type="ChEBI" id="CHEBI:57288"/>
        <dbReference type="ChEBI" id="CHEBI:57776"/>
        <dbReference type="ChEBI" id="CHEBI:58516"/>
        <dbReference type="EC" id="2.3.1.157"/>
    </reaction>
</comment>
<comment type="catalytic activity">
    <reaction evidence="1">
        <text>N-acetyl-alpha-D-glucosamine 1-phosphate + UTP + H(+) = UDP-N-acetyl-alpha-D-glucosamine + diphosphate</text>
        <dbReference type="Rhea" id="RHEA:13509"/>
        <dbReference type="ChEBI" id="CHEBI:15378"/>
        <dbReference type="ChEBI" id="CHEBI:33019"/>
        <dbReference type="ChEBI" id="CHEBI:46398"/>
        <dbReference type="ChEBI" id="CHEBI:57705"/>
        <dbReference type="ChEBI" id="CHEBI:57776"/>
        <dbReference type="EC" id="2.7.7.23"/>
    </reaction>
</comment>
<comment type="cofactor">
    <cofactor evidence="1">
        <name>Mg(2+)</name>
        <dbReference type="ChEBI" id="CHEBI:18420"/>
    </cofactor>
    <text evidence="1">Binds 1 Mg(2+) ion per subunit.</text>
</comment>
<comment type="pathway">
    <text evidence="1">Nucleotide-sugar biosynthesis; UDP-N-acetyl-alpha-D-glucosamine biosynthesis; N-acetyl-alpha-D-glucosamine 1-phosphate from alpha-D-glucosamine 6-phosphate (route II): step 2/2.</text>
</comment>
<comment type="pathway">
    <text evidence="1">Nucleotide-sugar biosynthesis; UDP-N-acetyl-alpha-D-glucosamine biosynthesis; UDP-N-acetyl-alpha-D-glucosamine from N-acetyl-alpha-D-glucosamine 1-phosphate: step 1/1.</text>
</comment>
<comment type="pathway">
    <text evidence="1">Bacterial outer membrane biogenesis; LPS lipid A biosynthesis.</text>
</comment>
<comment type="subunit">
    <text evidence="1">Homotrimer.</text>
</comment>
<comment type="subcellular location">
    <subcellularLocation>
        <location evidence="1">Cytoplasm</location>
    </subcellularLocation>
</comment>
<comment type="similarity">
    <text evidence="1">In the N-terminal section; belongs to the N-acetylglucosamine-1-phosphate uridyltransferase family.</text>
</comment>
<comment type="similarity">
    <text evidence="1">In the C-terminal section; belongs to the transferase hexapeptide repeat family.</text>
</comment>
<organism>
    <name type="scientific">Streptococcus mutans serotype c (strain ATCC 700610 / UA159)</name>
    <dbReference type="NCBI Taxonomy" id="210007"/>
    <lineage>
        <taxon>Bacteria</taxon>
        <taxon>Bacillati</taxon>
        <taxon>Bacillota</taxon>
        <taxon>Bacilli</taxon>
        <taxon>Lactobacillales</taxon>
        <taxon>Streptococcaceae</taxon>
        <taxon>Streptococcus</taxon>
    </lineage>
</organism>
<proteinExistence type="inferred from homology"/>
<dbReference type="EC" id="2.7.7.23" evidence="1"/>
<dbReference type="EC" id="2.3.1.157" evidence="1"/>
<dbReference type="EMBL" id="AE014133">
    <property type="protein sequence ID" value="AAN59275.1"/>
    <property type="molecule type" value="Genomic_DNA"/>
</dbReference>
<dbReference type="RefSeq" id="NP_721969.1">
    <property type="nucleotide sequence ID" value="NC_004350.2"/>
</dbReference>
<dbReference type="RefSeq" id="WP_002263614.1">
    <property type="nucleotide sequence ID" value="NC_004350.2"/>
</dbReference>
<dbReference type="SMR" id="Q8DSX2"/>
<dbReference type="STRING" id="210007.SMU_1635"/>
<dbReference type="KEGG" id="smu:SMU_1635"/>
<dbReference type="PATRIC" id="fig|210007.7.peg.1458"/>
<dbReference type="eggNOG" id="COG1207">
    <property type="taxonomic scope" value="Bacteria"/>
</dbReference>
<dbReference type="HOGENOM" id="CLU_029499_15_2_9"/>
<dbReference type="OrthoDB" id="9775031at2"/>
<dbReference type="PhylomeDB" id="Q8DSX2"/>
<dbReference type="UniPathway" id="UPA00113">
    <property type="reaction ID" value="UER00532"/>
</dbReference>
<dbReference type="UniPathway" id="UPA00113">
    <property type="reaction ID" value="UER00533"/>
</dbReference>
<dbReference type="UniPathway" id="UPA00973"/>
<dbReference type="Proteomes" id="UP000002512">
    <property type="component" value="Chromosome"/>
</dbReference>
<dbReference type="GO" id="GO:0005737">
    <property type="term" value="C:cytoplasm"/>
    <property type="evidence" value="ECO:0007669"/>
    <property type="project" value="UniProtKB-SubCell"/>
</dbReference>
<dbReference type="GO" id="GO:0016020">
    <property type="term" value="C:membrane"/>
    <property type="evidence" value="ECO:0007669"/>
    <property type="project" value="GOC"/>
</dbReference>
<dbReference type="GO" id="GO:0019134">
    <property type="term" value="F:glucosamine-1-phosphate N-acetyltransferase activity"/>
    <property type="evidence" value="ECO:0007669"/>
    <property type="project" value="UniProtKB-UniRule"/>
</dbReference>
<dbReference type="GO" id="GO:0000287">
    <property type="term" value="F:magnesium ion binding"/>
    <property type="evidence" value="ECO:0007669"/>
    <property type="project" value="UniProtKB-UniRule"/>
</dbReference>
<dbReference type="GO" id="GO:0003977">
    <property type="term" value="F:UDP-N-acetylglucosamine diphosphorylase activity"/>
    <property type="evidence" value="ECO:0007669"/>
    <property type="project" value="UniProtKB-UniRule"/>
</dbReference>
<dbReference type="GO" id="GO:0000902">
    <property type="term" value="P:cell morphogenesis"/>
    <property type="evidence" value="ECO:0007669"/>
    <property type="project" value="UniProtKB-UniRule"/>
</dbReference>
<dbReference type="GO" id="GO:0071555">
    <property type="term" value="P:cell wall organization"/>
    <property type="evidence" value="ECO:0007669"/>
    <property type="project" value="UniProtKB-KW"/>
</dbReference>
<dbReference type="GO" id="GO:0009245">
    <property type="term" value="P:lipid A biosynthetic process"/>
    <property type="evidence" value="ECO:0007669"/>
    <property type="project" value="UniProtKB-UniRule"/>
</dbReference>
<dbReference type="GO" id="GO:0009252">
    <property type="term" value="P:peptidoglycan biosynthetic process"/>
    <property type="evidence" value="ECO:0007669"/>
    <property type="project" value="UniProtKB-UniRule"/>
</dbReference>
<dbReference type="GO" id="GO:0008360">
    <property type="term" value="P:regulation of cell shape"/>
    <property type="evidence" value="ECO:0007669"/>
    <property type="project" value="UniProtKB-KW"/>
</dbReference>
<dbReference type="GO" id="GO:0006048">
    <property type="term" value="P:UDP-N-acetylglucosamine biosynthetic process"/>
    <property type="evidence" value="ECO:0007669"/>
    <property type="project" value="UniProtKB-UniPathway"/>
</dbReference>
<dbReference type="CDD" id="cd02540">
    <property type="entry name" value="GT2_GlmU_N_bac"/>
    <property type="match status" value="1"/>
</dbReference>
<dbReference type="CDD" id="cd03353">
    <property type="entry name" value="LbH_GlmU_C"/>
    <property type="match status" value="1"/>
</dbReference>
<dbReference type="Gene3D" id="2.160.10.10">
    <property type="entry name" value="Hexapeptide repeat proteins"/>
    <property type="match status" value="1"/>
</dbReference>
<dbReference type="Gene3D" id="3.90.550.10">
    <property type="entry name" value="Spore Coat Polysaccharide Biosynthesis Protein SpsA, Chain A"/>
    <property type="match status" value="1"/>
</dbReference>
<dbReference type="HAMAP" id="MF_01631">
    <property type="entry name" value="GlmU"/>
    <property type="match status" value="1"/>
</dbReference>
<dbReference type="InterPro" id="IPR005882">
    <property type="entry name" value="Bifunctional_GlmU"/>
</dbReference>
<dbReference type="InterPro" id="IPR050065">
    <property type="entry name" value="GlmU-like"/>
</dbReference>
<dbReference type="InterPro" id="IPR038009">
    <property type="entry name" value="GlmU_C_LbH"/>
</dbReference>
<dbReference type="InterPro" id="IPR001451">
    <property type="entry name" value="Hexapep"/>
</dbReference>
<dbReference type="InterPro" id="IPR025877">
    <property type="entry name" value="MobA-like_NTP_Trfase"/>
</dbReference>
<dbReference type="InterPro" id="IPR029044">
    <property type="entry name" value="Nucleotide-diphossugar_trans"/>
</dbReference>
<dbReference type="InterPro" id="IPR011004">
    <property type="entry name" value="Trimer_LpxA-like_sf"/>
</dbReference>
<dbReference type="NCBIfam" id="TIGR01173">
    <property type="entry name" value="glmU"/>
    <property type="match status" value="1"/>
</dbReference>
<dbReference type="NCBIfam" id="NF010934">
    <property type="entry name" value="PRK14354.1"/>
    <property type="match status" value="1"/>
</dbReference>
<dbReference type="PANTHER" id="PTHR43584:SF3">
    <property type="entry name" value="BIFUNCTIONAL PROTEIN GLMU"/>
    <property type="match status" value="1"/>
</dbReference>
<dbReference type="PANTHER" id="PTHR43584">
    <property type="entry name" value="NUCLEOTIDYL TRANSFERASE"/>
    <property type="match status" value="1"/>
</dbReference>
<dbReference type="Pfam" id="PF00132">
    <property type="entry name" value="Hexapep"/>
    <property type="match status" value="1"/>
</dbReference>
<dbReference type="Pfam" id="PF12804">
    <property type="entry name" value="NTP_transf_3"/>
    <property type="match status" value="1"/>
</dbReference>
<dbReference type="SUPFAM" id="SSF53448">
    <property type="entry name" value="Nucleotide-diphospho-sugar transferases"/>
    <property type="match status" value="1"/>
</dbReference>
<dbReference type="SUPFAM" id="SSF51161">
    <property type="entry name" value="Trimeric LpxA-like enzymes"/>
    <property type="match status" value="1"/>
</dbReference>
<feature type="chain" id="PRO_0000233849" description="Bifunctional protein GlmU">
    <location>
        <begin position="1"/>
        <end position="459"/>
    </location>
</feature>
<feature type="region of interest" description="Pyrophosphorylase" evidence="1">
    <location>
        <begin position="1"/>
        <end position="229"/>
    </location>
</feature>
<feature type="region of interest" description="Linker" evidence="1">
    <location>
        <begin position="230"/>
        <end position="250"/>
    </location>
</feature>
<feature type="region of interest" description="N-acetyltransferase" evidence="1">
    <location>
        <begin position="251"/>
        <end position="459"/>
    </location>
</feature>
<feature type="active site" description="Proton acceptor" evidence="1">
    <location>
        <position position="362"/>
    </location>
</feature>
<feature type="binding site" evidence="1">
    <location>
        <begin position="8"/>
        <end position="11"/>
    </location>
    <ligand>
        <name>UDP-N-acetyl-alpha-D-glucosamine</name>
        <dbReference type="ChEBI" id="CHEBI:57705"/>
    </ligand>
</feature>
<feature type="binding site" evidence="1">
    <location>
        <position position="22"/>
    </location>
    <ligand>
        <name>UDP-N-acetyl-alpha-D-glucosamine</name>
        <dbReference type="ChEBI" id="CHEBI:57705"/>
    </ligand>
</feature>
<feature type="binding site" evidence="1">
    <location>
        <position position="72"/>
    </location>
    <ligand>
        <name>UDP-N-acetyl-alpha-D-glucosamine</name>
        <dbReference type="ChEBI" id="CHEBI:57705"/>
    </ligand>
</feature>
<feature type="binding site" evidence="1">
    <location>
        <begin position="77"/>
        <end position="78"/>
    </location>
    <ligand>
        <name>UDP-N-acetyl-alpha-D-glucosamine</name>
        <dbReference type="ChEBI" id="CHEBI:57705"/>
    </ligand>
</feature>
<feature type="binding site" evidence="1">
    <location>
        <position position="102"/>
    </location>
    <ligand>
        <name>Mg(2+)</name>
        <dbReference type="ChEBI" id="CHEBI:18420"/>
    </ligand>
</feature>
<feature type="binding site" evidence="1">
    <location>
        <position position="139"/>
    </location>
    <ligand>
        <name>UDP-N-acetyl-alpha-D-glucosamine</name>
        <dbReference type="ChEBI" id="CHEBI:57705"/>
    </ligand>
</feature>
<feature type="binding site" evidence="1">
    <location>
        <position position="154"/>
    </location>
    <ligand>
        <name>UDP-N-acetyl-alpha-D-glucosamine</name>
        <dbReference type="ChEBI" id="CHEBI:57705"/>
    </ligand>
</feature>
<feature type="binding site" evidence="1">
    <location>
        <position position="169"/>
    </location>
    <ligand>
        <name>UDP-N-acetyl-alpha-D-glucosamine</name>
        <dbReference type="ChEBI" id="CHEBI:57705"/>
    </ligand>
</feature>
<feature type="binding site" evidence="1">
    <location>
        <position position="227"/>
    </location>
    <ligand>
        <name>Mg(2+)</name>
        <dbReference type="ChEBI" id="CHEBI:18420"/>
    </ligand>
</feature>
<feature type="binding site" evidence="1">
    <location>
        <position position="227"/>
    </location>
    <ligand>
        <name>UDP-N-acetyl-alpha-D-glucosamine</name>
        <dbReference type="ChEBI" id="CHEBI:57705"/>
    </ligand>
</feature>
<feature type="binding site" evidence="1">
    <location>
        <position position="332"/>
    </location>
    <ligand>
        <name>UDP-N-acetyl-alpha-D-glucosamine</name>
        <dbReference type="ChEBI" id="CHEBI:57705"/>
    </ligand>
</feature>
<feature type="binding site" evidence="1">
    <location>
        <position position="350"/>
    </location>
    <ligand>
        <name>UDP-N-acetyl-alpha-D-glucosamine</name>
        <dbReference type="ChEBI" id="CHEBI:57705"/>
    </ligand>
</feature>
<feature type="binding site" evidence="1">
    <location>
        <position position="365"/>
    </location>
    <ligand>
        <name>UDP-N-acetyl-alpha-D-glucosamine</name>
        <dbReference type="ChEBI" id="CHEBI:57705"/>
    </ligand>
</feature>
<feature type="binding site" evidence="1">
    <location>
        <position position="376"/>
    </location>
    <ligand>
        <name>UDP-N-acetyl-alpha-D-glucosamine</name>
        <dbReference type="ChEBI" id="CHEBI:57705"/>
    </ligand>
</feature>
<feature type="binding site" evidence="1">
    <location>
        <position position="379"/>
    </location>
    <ligand>
        <name>acetyl-CoA</name>
        <dbReference type="ChEBI" id="CHEBI:57288"/>
    </ligand>
</feature>
<feature type="binding site" evidence="1">
    <location>
        <begin position="385"/>
        <end position="386"/>
    </location>
    <ligand>
        <name>acetyl-CoA</name>
        <dbReference type="ChEBI" id="CHEBI:57288"/>
    </ligand>
</feature>
<feature type="binding site" evidence="1">
    <location>
        <position position="404"/>
    </location>
    <ligand>
        <name>acetyl-CoA</name>
        <dbReference type="ChEBI" id="CHEBI:57288"/>
    </ligand>
</feature>
<feature type="binding site" evidence="1">
    <location>
        <position position="422"/>
    </location>
    <ligand>
        <name>acetyl-CoA</name>
        <dbReference type="ChEBI" id="CHEBI:57288"/>
    </ligand>
</feature>
<feature type="binding site" evidence="1">
    <location>
        <position position="439"/>
    </location>
    <ligand>
        <name>acetyl-CoA</name>
        <dbReference type="ChEBI" id="CHEBI:57288"/>
    </ligand>
</feature>
<protein>
    <recommendedName>
        <fullName evidence="1">Bifunctional protein GlmU</fullName>
    </recommendedName>
    <domain>
        <recommendedName>
            <fullName evidence="1">UDP-N-acetylglucosamine pyrophosphorylase</fullName>
            <ecNumber evidence="1">2.7.7.23</ecNumber>
        </recommendedName>
        <alternativeName>
            <fullName evidence="1">N-acetylglucosamine-1-phosphate uridyltransferase</fullName>
        </alternativeName>
    </domain>
    <domain>
        <recommendedName>
            <fullName evidence="1">Glucosamine-1-phosphate N-acetyltransferase</fullName>
            <ecNumber evidence="1">2.3.1.157</ecNumber>
        </recommendedName>
    </domain>
</protein>
<reference key="1">
    <citation type="journal article" date="2002" name="Proc. Natl. Acad. Sci. U.S.A.">
        <title>Genome sequence of Streptococcus mutans UA159, a cariogenic dental pathogen.</title>
        <authorList>
            <person name="Ajdic D.J."/>
            <person name="McShan W.M."/>
            <person name="McLaughlin R.E."/>
            <person name="Savic G."/>
            <person name="Chang J."/>
            <person name="Carson M.B."/>
            <person name="Primeaux C."/>
            <person name="Tian R."/>
            <person name="Kenton S."/>
            <person name="Jia H.G."/>
            <person name="Lin S.P."/>
            <person name="Qian Y."/>
            <person name="Li S."/>
            <person name="Zhu H."/>
            <person name="Najar F.Z."/>
            <person name="Lai H."/>
            <person name="White J."/>
            <person name="Roe B.A."/>
            <person name="Ferretti J.J."/>
        </authorList>
    </citation>
    <scope>NUCLEOTIDE SEQUENCE [LARGE SCALE GENOMIC DNA]</scope>
    <source>
        <strain>ATCC 700610 / UA159</strain>
    </source>
</reference>
<evidence type="ECO:0000255" key="1">
    <source>
        <dbReference type="HAMAP-Rule" id="MF_01631"/>
    </source>
</evidence>
<keyword id="KW-0012">Acyltransferase</keyword>
<keyword id="KW-0133">Cell shape</keyword>
<keyword id="KW-0961">Cell wall biogenesis/degradation</keyword>
<keyword id="KW-0963">Cytoplasm</keyword>
<keyword id="KW-0460">Magnesium</keyword>
<keyword id="KW-0479">Metal-binding</keyword>
<keyword id="KW-0511">Multifunctional enzyme</keyword>
<keyword id="KW-0548">Nucleotidyltransferase</keyword>
<keyword id="KW-0573">Peptidoglycan synthesis</keyword>
<keyword id="KW-1185">Reference proteome</keyword>
<keyword id="KW-0677">Repeat</keyword>
<keyword id="KW-0808">Transferase</keyword>